<protein>
    <recommendedName>
        <fullName evidence="1">Ribosomal RNA small subunit methyltransferase G</fullName>
        <ecNumber evidence="1">2.1.1.170</ecNumber>
    </recommendedName>
    <alternativeName>
        <fullName evidence="1">16S rRNA 7-methylguanosine methyltransferase</fullName>
        <shortName evidence="1">16S rRNA m7G methyltransferase</shortName>
    </alternativeName>
</protein>
<reference key="1">
    <citation type="journal article" date="2004" name="Proc. Natl. Acad. Sci. U.S.A.">
        <title>Genome sequence of the enterobacterial phytopathogen Erwinia carotovora subsp. atroseptica and characterization of virulence factors.</title>
        <authorList>
            <person name="Bell K.S."/>
            <person name="Sebaihia M."/>
            <person name="Pritchard L."/>
            <person name="Holden M.T.G."/>
            <person name="Hyman L.J."/>
            <person name="Holeva M.C."/>
            <person name="Thomson N.R."/>
            <person name="Bentley S.D."/>
            <person name="Churcher L.J.C."/>
            <person name="Mungall K."/>
            <person name="Atkin R."/>
            <person name="Bason N."/>
            <person name="Brooks K."/>
            <person name="Chillingworth T."/>
            <person name="Clark K."/>
            <person name="Doggett J."/>
            <person name="Fraser A."/>
            <person name="Hance Z."/>
            <person name="Hauser H."/>
            <person name="Jagels K."/>
            <person name="Moule S."/>
            <person name="Norbertczak H."/>
            <person name="Ormond D."/>
            <person name="Price C."/>
            <person name="Quail M.A."/>
            <person name="Sanders M."/>
            <person name="Walker D."/>
            <person name="Whitehead S."/>
            <person name="Salmond G.P.C."/>
            <person name="Birch P.R.J."/>
            <person name="Parkhill J."/>
            <person name="Toth I.K."/>
        </authorList>
    </citation>
    <scope>NUCLEOTIDE SEQUENCE [LARGE SCALE GENOMIC DNA]</scope>
    <source>
        <strain>SCRI 1043 / ATCC BAA-672</strain>
    </source>
</reference>
<accession>Q6CYI7</accession>
<name>RSMG_PECAS</name>
<keyword id="KW-0963">Cytoplasm</keyword>
<keyword id="KW-0489">Methyltransferase</keyword>
<keyword id="KW-1185">Reference proteome</keyword>
<keyword id="KW-0698">rRNA processing</keyword>
<keyword id="KW-0949">S-adenosyl-L-methionine</keyword>
<keyword id="KW-0808">Transferase</keyword>
<feature type="chain" id="PRO_0000184248" description="Ribosomal RNA small subunit methyltransferase G">
    <location>
        <begin position="1"/>
        <end position="206"/>
    </location>
</feature>
<feature type="binding site" evidence="1">
    <location>
        <position position="73"/>
    </location>
    <ligand>
        <name>S-adenosyl-L-methionine</name>
        <dbReference type="ChEBI" id="CHEBI:59789"/>
    </ligand>
</feature>
<feature type="binding site" evidence="1">
    <location>
        <position position="78"/>
    </location>
    <ligand>
        <name>S-adenosyl-L-methionine</name>
        <dbReference type="ChEBI" id="CHEBI:59789"/>
    </ligand>
</feature>
<feature type="binding site" evidence="1">
    <location>
        <begin position="124"/>
        <end position="125"/>
    </location>
    <ligand>
        <name>S-adenosyl-L-methionine</name>
        <dbReference type="ChEBI" id="CHEBI:59789"/>
    </ligand>
</feature>
<feature type="binding site" evidence="1">
    <location>
        <position position="139"/>
    </location>
    <ligand>
        <name>S-adenosyl-L-methionine</name>
        <dbReference type="ChEBI" id="CHEBI:59789"/>
    </ligand>
</feature>
<gene>
    <name evidence="1" type="primary">rsmG</name>
    <name type="ordered locus">ECA4520</name>
</gene>
<dbReference type="EC" id="2.1.1.170" evidence="1"/>
<dbReference type="EMBL" id="BX950851">
    <property type="protein sequence ID" value="CAG77415.1"/>
    <property type="molecule type" value="Genomic_DNA"/>
</dbReference>
<dbReference type="RefSeq" id="WP_011095972.1">
    <property type="nucleotide sequence ID" value="NC_004547.2"/>
</dbReference>
<dbReference type="SMR" id="Q6CYI7"/>
<dbReference type="STRING" id="218491.ECA4520"/>
<dbReference type="KEGG" id="eca:ECA4520"/>
<dbReference type="PATRIC" id="fig|218491.5.peg.4607"/>
<dbReference type="eggNOG" id="COG0357">
    <property type="taxonomic scope" value="Bacteria"/>
</dbReference>
<dbReference type="HOGENOM" id="CLU_065341_2_2_6"/>
<dbReference type="OrthoDB" id="9808773at2"/>
<dbReference type="Proteomes" id="UP000007966">
    <property type="component" value="Chromosome"/>
</dbReference>
<dbReference type="GO" id="GO:0005829">
    <property type="term" value="C:cytosol"/>
    <property type="evidence" value="ECO:0007669"/>
    <property type="project" value="TreeGrafter"/>
</dbReference>
<dbReference type="GO" id="GO:0070043">
    <property type="term" value="F:rRNA (guanine-N7-)-methyltransferase activity"/>
    <property type="evidence" value="ECO:0007669"/>
    <property type="project" value="UniProtKB-UniRule"/>
</dbReference>
<dbReference type="CDD" id="cd02440">
    <property type="entry name" value="AdoMet_MTases"/>
    <property type="match status" value="1"/>
</dbReference>
<dbReference type="FunFam" id="3.40.50.150:FF:000032">
    <property type="entry name" value="Ribosomal RNA small subunit methyltransferase G"/>
    <property type="match status" value="1"/>
</dbReference>
<dbReference type="Gene3D" id="3.40.50.150">
    <property type="entry name" value="Vaccinia Virus protein VP39"/>
    <property type="match status" value="1"/>
</dbReference>
<dbReference type="HAMAP" id="MF_00074">
    <property type="entry name" value="16SrRNA_methyltr_G"/>
    <property type="match status" value="1"/>
</dbReference>
<dbReference type="InterPro" id="IPR003682">
    <property type="entry name" value="rRNA_ssu_MeTfrase_G"/>
</dbReference>
<dbReference type="InterPro" id="IPR029063">
    <property type="entry name" value="SAM-dependent_MTases_sf"/>
</dbReference>
<dbReference type="NCBIfam" id="TIGR00138">
    <property type="entry name" value="rsmG_gidB"/>
    <property type="match status" value="1"/>
</dbReference>
<dbReference type="PANTHER" id="PTHR31760">
    <property type="entry name" value="S-ADENOSYL-L-METHIONINE-DEPENDENT METHYLTRANSFERASES SUPERFAMILY PROTEIN"/>
    <property type="match status" value="1"/>
</dbReference>
<dbReference type="PANTHER" id="PTHR31760:SF0">
    <property type="entry name" value="S-ADENOSYL-L-METHIONINE-DEPENDENT METHYLTRANSFERASES SUPERFAMILY PROTEIN"/>
    <property type="match status" value="1"/>
</dbReference>
<dbReference type="Pfam" id="PF02527">
    <property type="entry name" value="GidB"/>
    <property type="match status" value="1"/>
</dbReference>
<dbReference type="PIRSF" id="PIRSF003078">
    <property type="entry name" value="GidB"/>
    <property type="match status" value="1"/>
</dbReference>
<dbReference type="SUPFAM" id="SSF53335">
    <property type="entry name" value="S-adenosyl-L-methionine-dependent methyltransferases"/>
    <property type="match status" value="1"/>
</dbReference>
<comment type="function">
    <text evidence="1">Specifically methylates the N7 position of guanine in position 527 of 16S rRNA.</text>
</comment>
<comment type="catalytic activity">
    <reaction evidence="1">
        <text>guanosine(527) in 16S rRNA + S-adenosyl-L-methionine = N(7)-methylguanosine(527) in 16S rRNA + S-adenosyl-L-homocysteine</text>
        <dbReference type="Rhea" id="RHEA:42732"/>
        <dbReference type="Rhea" id="RHEA-COMP:10209"/>
        <dbReference type="Rhea" id="RHEA-COMP:10210"/>
        <dbReference type="ChEBI" id="CHEBI:57856"/>
        <dbReference type="ChEBI" id="CHEBI:59789"/>
        <dbReference type="ChEBI" id="CHEBI:74269"/>
        <dbReference type="ChEBI" id="CHEBI:74480"/>
        <dbReference type="EC" id="2.1.1.170"/>
    </reaction>
</comment>
<comment type="subcellular location">
    <subcellularLocation>
        <location evidence="1">Cytoplasm</location>
    </subcellularLocation>
</comment>
<comment type="similarity">
    <text evidence="1">Belongs to the methyltransferase superfamily. RNA methyltransferase RsmG family.</text>
</comment>
<evidence type="ECO:0000255" key="1">
    <source>
        <dbReference type="HAMAP-Rule" id="MF_00074"/>
    </source>
</evidence>
<sequence length="206" mass="23235">MRNTLDNLLNAAGIVISDKQKNLLIQYVDMLNKWNKAYNLTSVRDPQQMLVRHIMDSIVVEPHLHGQRFIDVGTGPGLPGIPLAIVRPESHFTLLDSLGKRVRFLRQVQHELQLENITPVQSRVEDFPAEPPFDGVISRAFASLQDMISWCNHLPARTTGRFYALKGVLPQDELSSLPQGVLLDQVVRLSVPDLEGERHLIVLKPN</sequence>
<proteinExistence type="inferred from homology"/>
<organism>
    <name type="scientific">Pectobacterium atrosepticum (strain SCRI 1043 / ATCC BAA-672)</name>
    <name type="common">Erwinia carotovora subsp. atroseptica</name>
    <dbReference type="NCBI Taxonomy" id="218491"/>
    <lineage>
        <taxon>Bacteria</taxon>
        <taxon>Pseudomonadati</taxon>
        <taxon>Pseudomonadota</taxon>
        <taxon>Gammaproteobacteria</taxon>
        <taxon>Enterobacterales</taxon>
        <taxon>Pectobacteriaceae</taxon>
        <taxon>Pectobacterium</taxon>
    </lineage>
</organism>